<name>VTH1A_SOYBN</name>
<feature type="chain" id="PRO_0000213728" description="VIT-like transporter 1a">
    <location>
        <begin position="1"/>
        <end position="206"/>
    </location>
</feature>
<feature type="transmembrane region" description="Helical" evidence="1">
    <location>
        <begin position="61"/>
        <end position="81"/>
    </location>
</feature>
<feature type="transmembrane region" description="Helical" evidence="1">
    <location>
        <begin position="89"/>
        <end position="109"/>
    </location>
</feature>
<feature type="transmembrane region" description="Helical" evidence="1">
    <location>
        <begin position="153"/>
        <end position="173"/>
    </location>
</feature>
<feature type="transmembrane region" description="Helical" evidence="1">
    <location>
        <begin position="180"/>
        <end position="200"/>
    </location>
</feature>
<feature type="mutagenesis site" description="Reduces the efficiency of iron transport." evidence="4">
    <original>A</original>
    <variation>V</variation>
    <location>
        <position position="54"/>
    </location>
</feature>
<feature type="mutagenesis site" description="Slightly reduces the efficiency of iron transport." evidence="4">
    <original>R</original>
    <variation>K</variation>
    <location>
        <position position="124"/>
    </location>
</feature>
<feature type="mutagenesis site" description="Reduces the efficiency of iron transport." evidence="4">
    <original>G</original>
    <variation>K</variation>
    <location>
        <position position="202"/>
    </location>
</feature>
<keyword id="KW-0406">Ion transport</keyword>
<keyword id="KW-0408">Iron</keyword>
<keyword id="KW-0410">Iron transport</keyword>
<keyword id="KW-0472">Membrane</keyword>
<keyword id="KW-0479">Metal-binding</keyword>
<keyword id="KW-0535">Nitrogen fixation</keyword>
<keyword id="KW-0536">Nodulation</keyword>
<keyword id="KW-1185">Reference proteome</keyword>
<keyword id="KW-0812">Transmembrane</keyword>
<keyword id="KW-1133">Transmembrane helix</keyword>
<keyword id="KW-0813">Transport</keyword>
<keyword id="KW-0926">Vacuole</keyword>
<comment type="function">
    <text evidence="3 4">Vacuolar iron transporter that is required for the accumulation of Fe(2+) ions in the fixation zone of the root nodules (PubMed:32119117, PubMed:32533710). Plays an important role in maintenance of symbiotic nitrogen fixation activity, for example during symbiosis with Bradyrhizobium japonicum (PubMed:32119117).</text>
</comment>
<comment type="catalytic activity">
    <reaction evidence="3 4">
        <text>Fe(2+)(in) = Fe(2+)(out)</text>
        <dbReference type="Rhea" id="RHEA:28486"/>
        <dbReference type="ChEBI" id="CHEBI:29033"/>
    </reaction>
    <physiologicalReaction direction="left-to-right" evidence="7">
        <dbReference type="Rhea" id="RHEA:28487"/>
    </physiologicalReaction>
</comment>
<comment type="subcellular location">
    <subcellularLocation>
        <location evidence="3 4">Vacuole membrane</location>
        <topology evidence="1">Multi-pass membrane protein</topology>
    </subcellularLocation>
    <text evidence="3 4">Localizes at the symbiosome membrane in the cells infected with Bradyrhizobium japonicum.</text>
</comment>
<comment type="tissue specificity">
    <text evidence="2 3 4">Highly expressed in the fixation zone of the root nodule (PubMed:2102825, PubMed:32119117, PubMed:32533710). No or low-level expression in root, leaf and stem (PubMed:2102825, PubMed:32119117, PubMed:32533710).</text>
</comment>
<comment type="developmental stage">
    <text evidence="3 4">Abundant during nodule development (PubMed:32119117). In nodules, expression is first detected at 13 days after inoculation with Bradyrhizobium japonicum and continues to increase until 25 days after inoculation (PubMed:32533710). Expression subsequently declines until 46 days after inoculation (PubMed:32533710). The decrease in expression is followed by an increase and the highest level of expression is observed at 61 days after inoculation (PubMed:32533710).</text>
</comment>
<comment type="induction">
    <text evidence="3">No significant changes in expression observed in response to short- or long-term iron deficiency in nodules.</text>
</comment>
<comment type="similarity">
    <text evidence="7">Belongs to the CCC1 family.</text>
</comment>
<sequence length="206" mass="21833">MVVVSPKMANATPNGSVPHNHVGAVLLTIPTIKIDGKQTLATEDHTSIDYLQRAQWLRAAILGANDGLVSVASLMMGVGAVKRDAKAMLLAGFAGLVAGACGMAIGEFVAVYTQYEVEVGQMKRDMNMSVGGERDLEMEMERRTLPNPLQATLASALCFSIGALVPLLSAAFIENYRTRIIVVVAMSCLALVVFGWVGAKLGKTPK</sequence>
<proteinExistence type="evidence at protein level"/>
<accession>P16313</accession>
<evidence type="ECO:0000255" key="1"/>
<evidence type="ECO:0000269" key="2">
    <source>
    </source>
</evidence>
<evidence type="ECO:0000269" key="3">
    <source>
    </source>
</evidence>
<evidence type="ECO:0000269" key="4">
    <source>
    </source>
</evidence>
<evidence type="ECO:0000303" key="5">
    <source>
    </source>
</evidence>
<evidence type="ECO:0000303" key="6">
    <source>
    </source>
</evidence>
<evidence type="ECO:0000305" key="7"/>
<reference key="1">
    <citation type="journal article" date="1990" name="Plant Mol. Biol.">
        <title>A nodule-specific sequence encoding a methionine-rich polypeptide, nodulin-21.</title>
        <authorList>
            <person name="Delauney A.J."/>
            <person name="Cheon C.-I."/>
            <person name="Verma D.P.S."/>
        </authorList>
    </citation>
    <scope>NUCLEOTIDE SEQUENCE [MRNA]</scope>
    <scope>TISSUE SPECIFICITY</scope>
    <source>
        <strain>cv. Prize</strain>
        <tissue>Root nodule</tissue>
    </source>
</reference>
<reference evidence="7" key="2">
    <citation type="journal article" date="2020" name="New Phytol.">
        <title>A VIT-like transporter facilitates iron transport into nodule symbiosomes for nitrogen fixation in soybean.</title>
        <authorList>
            <person name="Liu S."/>
            <person name="Liao L.L."/>
            <person name="Nie M.M."/>
            <person name="Peng W.T."/>
            <person name="Zhang M.S."/>
            <person name="Lei J.N."/>
            <person name="Zhong Y.J."/>
            <person name="Liao H."/>
            <person name="Chen Z.C."/>
        </authorList>
    </citation>
    <scope>FUNCTION</scope>
    <scope>TRANSPORTER ACTIVITY</scope>
    <scope>SUBCELLULAR LOCATION</scope>
    <scope>TISSUE SPECIFICITY</scope>
    <scope>DEVELOPMENTAL STAGE</scope>
    <scope>INDUCTION</scope>
</reference>
<reference evidence="7" key="3">
    <citation type="journal article" date="2020" name="New Phytol.">
        <title>GmVTL1a is an iron transporter on the symbiosome membrane of soybean with an important role in nitrogen fixation.</title>
        <authorList>
            <person name="Brear E.M."/>
            <person name="Bedon F."/>
            <person name="Gavrin A."/>
            <person name="Kryvoruchko I.S."/>
            <person name="Torres-Jerez I."/>
            <person name="Udvardi M.K."/>
            <person name="Day D.A."/>
            <person name="Smith P.M.C."/>
        </authorList>
    </citation>
    <scope>FUNCTION</scope>
    <scope>TRANSPORTER ACTIVITY</scope>
    <scope>SUBCELLULAR LOCATION</scope>
    <scope>TISSUE SPECIFICITY</scope>
    <scope>DEVELOPMENTAL STAGE</scope>
    <scope>MUTAGENESIS OF ALA-54; ARG-124 AND GLY-202</scope>
    <source>
        <strain evidence="6">cv. Stephens</strain>
    </source>
</reference>
<organism>
    <name type="scientific">Glycine max</name>
    <name type="common">Soybean</name>
    <name type="synonym">Glycine hispida</name>
    <dbReference type="NCBI Taxonomy" id="3847"/>
    <lineage>
        <taxon>Eukaryota</taxon>
        <taxon>Viridiplantae</taxon>
        <taxon>Streptophyta</taxon>
        <taxon>Embryophyta</taxon>
        <taxon>Tracheophyta</taxon>
        <taxon>Spermatophyta</taxon>
        <taxon>Magnoliopsida</taxon>
        <taxon>eudicotyledons</taxon>
        <taxon>Gunneridae</taxon>
        <taxon>Pentapetalae</taxon>
        <taxon>rosids</taxon>
        <taxon>fabids</taxon>
        <taxon>Fabales</taxon>
        <taxon>Fabaceae</taxon>
        <taxon>Papilionoideae</taxon>
        <taxon>50 kb inversion clade</taxon>
        <taxon>NPAAA clade</taxon>
        <taxon>indigoferoid/millettioid clade</taxon>
        <taxon>Phaseoleae</taxon>
        <taxon>Glycine</taxon>
        <taxon>Glycine subgen. Soja</taxon>
    </lineage>
</organism>
<gene>
    <name evidence="7" type="primary">N-21</name>
    <name evidence="6" type="synonym">VTL1a</name>
</gene>
<protein>
    <recommendedName>
        <fullName evidence="5">VIT-like transporter 1a</fullName>
        <shortName evidence="5 6">GmVTL1a</shortName>
    </recommendedName>
    <alternativeName>
        <fullName>Nodulin-21</fullName>
    </alternativeName>
</protein>
<dbReference type="EMBL" id="X16488">
    <property type="protein sequence ID" value="CAA34506.1"/>
    <property type="molecule type" value="mRNA"/>
</dbReference>
<dbReference type="PIR" id="S08632">
    <property type="entry name" value="S08632"/>
</dbReference>
<dbReference type="RefSeq" id="NP_001236825.1">
    <property type="nucleotide sequence ID" value="NM_001249896.1"/>
</dbReference>
<dbReference type="SMR" id="P16313"/>
<dbReference type="STRING" id="3847.P16313"/>
<dbReference type="PaxDb" id="3847-GLYMA05G25010.1"/>
<dbReference type="GeneID" id="547974"/>
<dbReference type="KEGG" id="gmx:547974"/>
<dbReference type="eggNOG" id="KOG4473">
    <property type="taxonomic scope" value="Eukaryota"/>
</dbReference>
<dbReference type="InParanoid" id="P16313"/>
<dbReference type="OrthoDB" id="73465at2759"/>
<dbReference type="Proteomes" id="UP000008827">
    <property type="component" value="Unplaced"/>
</dbReference>
<dbReference type="GO" id="GO:0016020">
    <property type="term" value="C:membrane"/>
    <property type="evidence" value="ECO:0000318"/>
    <property type="project" value="GO_Central"/>
</dbReference>
<dbReference type="GO" id="GO:0005774">
    <property type="term" value="C:vacuolar membrane"/>
    <property type="evidence" value="ECO:0007669"/>
    <property type="project" value="UniProtKB-SubCell"/>
</dbReference>
<dbReference type="GO" id="GO:0005381">
    <property type="term" value="F:iron ion transmembrane transporter activity"/>
    <property type="evidence" value="ECO:0000318"/>
    <property type="project" value="GO_Central"/>
</dbReference>
<dbReference type="GO" id="GO:0005384">
    <property type="term" value="F:manganese ion transmembrane transporter activity"/>
    <property type="evidence" value="ECO:0000318"/>
    <property type="project" value="GO_Central"/>
</dbReference>
<dbReference type="GO" id="GO:0046872">
    <property type="term" value="F:metal ion binding"/>
    <property type="evidence" value="ECO:0007669"/>
    <property type="project" value="UniProtKB-KW"/>
</dbReference>
<dbReference type="GO" id="GO:0030026">
    <property type="term" value="P:intracellular manganese ion homeostasis"/>
    <property type="evidence" value="ECO:0000318"/>
    <property type="project" value="GO_Central"/>
</dbReference>
<dbReference type="GO" id="GO:0009877">
    <property type="term" value="P:nodulation"/>
    <property type="evidence" value="ECO:0007669"/>
    <property type="project" value="UniProtKB-KW"/>
</dbReference>
<dbReference type="CDD" id="cd02436">
    <property type="entry name" value="Nodulin-21"/>
    <property type="match status" value="1"/>
</dbReference>
<dbReference type="InterPro" id="IPR008217">
    <property type="entry name" value="Ccc1_fam"/>
</dbReference>
<dbReference type="PANTHER" id="PTHR31851">
    <property type="entry name" value="FE(2+)/MN(2+) TRANSPORTER PCL1"/>
    <property type="match status" value="1"/>
</dbReference>
<dbReference type="Pfam" id="PF01988">
    <property type="entry name" value="VIT1"/>
    <property type="match status" value="2"/>
</dbReference>